<comment type="function">
    <text evidence="1">Catalyzes the ATP-dependent phosphorylation of N-acetyl-L-glutamate.</text>
</comment>
<comment type="catalytic activity">
    <reaction evidence="1">
        <text>N-acetyl-L-glutamate + ATP = N-acetyl-L-glutamyl 5-phosphate + ADP</text>
        <dbReference type="Rhea" id="RHEA:14629"/>
        <dbReference type="ChEBI" id="CHEBI:30616"/>
        <dbReference type="ChEBI" id="CHEBI:44337"/>
        <dbReference type="ChEBI" id="CHEBI:57936"/>
        <dbReference type="ChEBI" id="CHEBI:456216"/>
        <dbReference type="EC" id="2.7.2.8"/>
    </reaction>
</comment>
<comment type="pathway">
    <text evidence="1">Amino-acid biosynthesis; L-arginine biosynthesis; N(2)-acetyl-L-ornithine from L-glutamate: step 2/4.</text>
</comment>
<comment type="subcellular location">
    <subcellularLocation>
        <location evidence="1">Cytoplasm</location>
    </subcellularLocation>
</comment>
<comment type="similarity">
    <text evidence="1">Belongs to the acetylglutamate kinase family. ArgB subfamily.</text>
</comment>
<protein>
    <recommendedName>
        <fullName evidence="1">Acetylglutamate kinase</fullName>
        <ecNumber evidence="1">2.7.2.8</ecNumber>
    </recommendedName>
    <alternativeName>
        <fullName evidence="1">N-acetyl-L-glutamate 5-phosphotransferase</fullName>
    </alternativeName>
    <alternativeName>
        <fullName evidence="1">NAG kinase</fullName>
        <shortName evidence="1">NAGK</shortName>
    </alternativeName>
</protein>
<gene>
    <name evidence="1" type="primary">argB</name>
    <name type="ordered locus">Acel_1261</name>
</gene>
<feature type="chain" id="PRO_0000335602" description="Acetylglutamate kinase">
    <location>
        <begin position="1"/>
        <end position="296"/>
    </location>
</feature>
<feature type="binding site" evidence="1">
    <location>
        <begin position="68"/>
        <end position="69"/>
    </location>
    <ligand>
        <name>substrate</name>
    </ligand>
</feature>
<feature type="binding site" evidence="1">
    <location>
        <position position="90"/>
    </location>
    <ligand>
        <name>substrate</name>
    </ligand>
</feature>
<feature type="binding site" evidence="1">
    <location>
        <position position="193"/>
    </location>
    <ligand>
        <name>substrate</name>
    </ligand>
</feature>
<feature type="site" description="Transition state stabilizer" evidence="1">
    <location>
        <position position="33"/>
    </location>
</feature>
<feature type="site" description="Transition state stabilizer" evidence="1">
    <location>
        <position position="254"/>
    </location>
</feature>
<organism>
    <name type="scientific">Acidothermus cellulolyticus (strain ATCC 43068 / DSM 8971 / 11B)</name>
    <dbReference type="NCBI Taxonomy" id="351607"/>
    <lineage>
        <taxon>Bacteria</taxon>
        <taxon>Bacillati</taxon>
        <taxon>Actinomycetota</taxon>
        <taxon>Actinomycetes</taxon>
        <taxon>Acidothermales</taxon>
        <taxon>Acidothermaceae</taxon>
        <taxon>Acidothermus</taxon>
    </lineage>
</organism>
<proteinExistence type="inferred from homology"/>
<sequence>MSRDLTAVQAKAATLVEALPWLATFHGRTVVIKYGGHAMIDPGLAASFAADVVFLRYAGLRPVVVHGGGPQIDAMLRRLGIEPVFAAGLRVTTPETMDVVRMVLVGQVQREVVGLLNAHGPFAVGVSGEDGRLFTAVRRSAVVDGHDVDLGLVGEITEVNPTVIQSLLDDGHVPVVSSIAGGVDSDGRRCVYNVNADTAAAALAVALGAEKLVVLTDVEGLFADWPNTDEVISRLTADELEKLLPGLAAGMIPKMEACLRAVRGGVAAAHVLDGRVPHAILLEIFTDEGVGTMVVP</sequence>
<evidence type="ECO:0000255" key="1">
    <source>
        <dbReference type="HAMAP-Rule" id="MF_00082"/>
    </source>
</evidence>
<name>ARGB_ACIC1</name>
<keyword id="KW-0028">Amino-acid biosynthesis</keyword>
<keyword id="KW-0055">Arginine biosynthesis</keyword>
<keyword id="KW-0067">ATP-binding</keyword>
<keyword id="KW-0963">Cytoplasm</keyword>
<keyword id="KW-0418">Kinase</keyword>
<keyword id="KW-0547">Nucleotide-binding</keyword>
<keyword id="KW-1185">Reference proteome</keyword>
<keyword id="KW-0808">Transferase</keyword>
<accession>A0LUC3</accession>
<dbReference type="EC" id="2.7.2.8" evidence="1"/>
<dbReference type="EMBL" id="CP000481">
    <property type="protein sequence ID" value="ABK53033.1"/>
    <property type="molecule type" value="Genomic_DNA"/>
</dbReference>
<dbReference type="RefSeq" id="WP_011720096.1">
    <property type="nucleotide sequence ID" value="NC_008578.1"/>
</dbReference>
<dbReference type="SMR" id="A0LUC3"/>
<dbReference type="FunCoup" id="A0LUC3">
    <property type="interactions" value="257"/>
</dbReference>
<dbReference type="STRING" id="351607.Acel_1261"/>
<dbReference type="KEGG" id="ace:Acel_1261"/>
<dbReference type="eggNOG" id="COG0548">
    <property type="taxonomic scope" value="Bacteria"/>
</dbReference>
<dbReference type="HOGENOM" id="CLU_053680_0_0_11"/>
<dbReference type="InParanoid" id="A0LUC3"/>
<dbReference type="OrthoDB" id="9803155at2"/>
<dbReference type="UniPathway" id="UPA00068">
    <property type="reaction ID" value="UER00107"/>
</dbReference>
<dbReference type="Proteomes" id="UP000008221">
    <property type="component" value="Chromosome"/>
</dbReference>
<dbReference type="GO" id="GO:0005737">
    <property type="term" value="C:cytoplasm"/>
    <property type="evidence" value="ECO:0007669"/>
    <property type="project" value="UniProtKB-SubCell"/>
</dbReference>
<dbReference type="GO" id="GO:0003991">
    <property type="term" value="F:acetylglutamate kinase activity"/>
    <property type="evidence" value="ECO:0007669"/>
    <property type="project" value="UniProtKB-UniRule"/>
</dbReference>
<dbReference type="GO" id="GO:0005524">
    <property type="term" value="F:ATP binding"/>
    <property type="evidence" value="ECO:0007669"/>
    <property type="project" value="UniProtKB-UniRule"/>
</dbReference>
<dbReference type="GO" id="GO:0042450">
    <property type="term" value="P:arginine biosynthetic process via ornithine"/>
    <property type="evidence" value="ECO:0007669"/>
    <property type="project" value="UniProtKB-UniRule"/>
</dbReference>
<dbReference type="GO" id="GO:0006526">
    <property type="term" value="P:L-arginine biosynthetic process"/>
    <property type="evidence" value="ECO:0007669"/>
    <property type="project" value="UniProtKB-UniPathway"/>
</dbReference>
<dbReference type="CDD" id="cd04250">
    <property type="entry name" value="AAK_NAGK-C"/>
    <property type="match status" value="1"/>
</dbReference>
<dbReference type="FunFam" id="3.40.1160.10:FF:000004">
    <property type="entry name" value="Acetylglutamate kinase"/>
    <property type="match status" value="1"/>
</dbReference>
<dbReference type="Gene3D" id="3.40.1160.10">
    <property type="entry name" value="Acetylglutamate kinase-like"/>
    <property type="match status" value="1"/>
</dbReference>
<dbReference type="HAMAP" id="MF_00082">
    <property type="entry name" value="ArgB"/>
    <property type="match status" value="1"/>
</dbReference>
<dbReference type="InterPro" id="IPR036393">
    <property type="entry name" value="AceGlu_kinase-like_sf"/>
</dbReference>
<dbReference type="InterPro" id="IPR004662">
    <property type="entry name" value="AcgluKinase_fam"/>
</dbReference>
<dbReference type="InterPro" id="IPR037528">
    <property type="entry name" value="ArgB"/>
</dbReference>
<dbReference type="InterPro" id="IPR001048">
    <property type="entry name" value="Asp/Glu/Uridylate_kinase"/>
</dbReference>
<dbReference type="InterPro" id="IPR001057">
    <property type="entry name" value="Glu/AcGlu_kinase"/>
</dbReference>
<dbReference type="InterPro" id="IPR041727">
    <property type="entry name" value="NAGK-C"/>
</dbReference>
<dbReference type="NCBIfam" id="TIGR00761">
    <property type="entry name" value="argB"/>
    <property type="match status" value="1"/>
</dbReference>
<dbReference type="PANTHER" id="PTHR23342">
    <property type="entry name" value="N-ACETYLGLUTAMATE SYNTHASE"/>
    <property type="match status" value="1"/>
</dbReference>
<dbReference type="PANTHER" id="PTHR23342:SF0">
    <property type="entry name" value="N-ACETYLGLUTAMATE SYNTHASE, MITOCHONDRIAL"/>
    <property type="match status" value="1"/>
</dbReference>
<dbReference type="Pfam" id="PF00696">
    <property type="entry name" value="AA_kinase"/>
    <property type="match status" value="1"/>
</dbReference>
<dbReference type="PIRSF" id="PIRSF000728">
    <property type="entry name" value="NAGK"/>
    <property type="match status" value="1"/>
</dbReference>
<dbReference type="PRINTS" id="PR00474">
    <property type="entry name" value="GLU5KINASE"/>
</dbReference>
<dbReference type="SUPFAM" id="SSF53633">
    <property type="entry name" value="Carbamate kinase-like"/>
    <property type="match status" value="1"/>
</dbReference>
<reference key="1">
    <citation type="journal article" date="2009" name="Genome Res.">
        <title>Complete genome of the cellulolytic thermophile Acidothermus cellulolyticus 11B provides insights into its ecophysiological and evolutionary adaptations.</title>
        <authorList>
            <person name="Barabote R.D."/>
            <person name="Xie G."/>
            <person name="Leu D.H."/>
            <person name="Normand P."/>
            <person name="Necsulea A."/>
            <person name="Daubin V."/>
            <person name="Medigue C."/>
            <person name="Adney W.S."/>
            <person name="Xu X.C."/>
            <person name="Lapidus A."/>
            <person name="Parales R.E."/>
            <person name="Detter C."/>
            <person name="Pujic P."/>
            <person name="Bruce D."/>
            <person name="Lavire C."/>
            <person name="Challacombe J.F."/>
            <person name="Brettin T.S."/>
            <person name="Berry A.M."/>
        </authorList>
    </citation>
    <scope>NUCLEOTIDE SEQUENCE [LARGE SCALE GENOMIC DNA]</scope>
    <source>
        <strain>ATCC 43068 / DSM 8971 / 11B</strain>
    </source>
</reference>